<evidence type="ECO:0000255" key="1">
    <source>
        <dbReference type="HAMAP-Rule" id="MF_00012"/>
    </source>
</evidence>
<feature type="chain" id="PRO_1000190658" description="Dihydroxy-acid dehydratase">
    <location>
        <begin position="1"/>
        <end position="561"/>
    </location>
</feature>
<feature type="active site" description="Proton acceptor" evidence="1">
    <location>
        <position position="473"/>
    </location>
</feature>
<feature type="binding site" evidence="1">
    <location>
        <position position="50"/>
    </location>
    <ligand>
        <name>[2Fe-2S] cluster</name>
        <dbReference type="ChEBI" id="CHEBI:190135"/>
    </ligand>
</feature>
<feature type="binding site" evidence="1">
    <location>
        <position position="82"/>
    </location>
    <ligand>
        <name>Mg(2+)</name>
        <dbReference type="ChEBI" id="CHEBI:18420"/>
    </ligand>
</feature>
<feature type="binding site" evidence="1">
    <location>
        <position position="123"/>
    </location>
    <ligand>
        <name>[2Fe-2S] cluster</name>
        <dbReference type="ChEBI" id="CHEBI:190135"/>
    </ligand>
</feature>
<feature type="binding site" evidence="1">
    <location>
        <position position="124"/>
    </location>
    <ligand>
        <name>Mg(2+)</name>
        <dbReference type="ChEBI" id="CHEBI:18420"/>
    </ligand>
</feature>
<feature type="binding site" description="via carbamate group" evidence="1">
    <location>
        <position position="125"/>
    </location>
    <ligand>
        <name>Mg(2+)</name>
        <dbReference type="ChEBI" id="CHEBI:18420"/>
    </ligand>
</feature>
<feature type="binding site" evidence="1">
    <location>
        <position position="195"/>
    </location>
    <ligand>
        <name>[2Fe-2S] cluster</name>
        <dbReference type="ChEBI" id="CHEBI:190135"/>
    </ligand>
</feature>
<feature type="binding site" evidence="1">
    <location>
        <position position="447"/>
    </location>
    <ligand>
        <name>Mg(2+)</name>
        <dbReference type="ChEBI" id="CHEBI:18420"/>
    </ligand>
</feature>
<feature type="modified residue" description="N6-carboxylysine" evidence="1">
    <location>
        <position position="125"/>
    </location>
</feature>
<proteinExistence type="inferred from homology"/>
<protein>
    <recommendedName>
        <fullName evidence="1">Dihydroxy-acid dehydratase</fullName>
        <shortName evidence="1">DAD</shortName>
        <ecNumber evidence="1">4.2.1.9</ecNumber>
    </recommendedName>
</protein>
<accession>B9LM83</accession>
<name>ILVD_CHLSY</name>
<dbReference type="EC" id="4.2.1.9" evidence="1"/>
<dbReference type="EMBL" id="CP001364">
    <property type="protein sequence ID" value="ACM54467.1"/>
    <property type="molecule type" value="Genomic_DNA"/>
</dbReference>
<dbReference type="SMR" id="B9LM83"/>
<dbReference type="KEGG" id="chl:Chy400_3088"/>
<dbReference type="HOGENOM" id="CLU_014271_4_2_0"/>
<dbReference type="OrthoDB" id="9807077at2"/>
<dbReference type="UniPathway" id="UPA00047">
    <property type="reaction ID" value="UER00057"/>
</dbReference>
<dbReference type="UniPathway" id="UPA00049">
    <property type="reaction ID" value="UER00061"/>
</dbReference>
<dbReference type="GO" id="GO:0051537">
    <property type="term" value="F:2 iron, 2 sulfur cluster binding"/>
    <property type="evidence" value="ECO:0007669"/>
    <property type="project" value="UniProtKB-UniRule"/>
</dbReference>
<dbReference type="GO" id="GO:0004160">
    <property type="term" value="F:dihydroxy-acid dehydratase activity"/>
    <property type="evidence" value="ECO:0007669"/>
    <property type="project" value="UniProtKB-UniRule"/>
</dbReference>
<dbReference type="GO" id="GO:0000287">
    <property type="term" value="F:magnesium ion binding"/>
    <property type="evidence" value="ECO:0007669"/>
    <property type="project" value="UniProtKB-UniRule"/>
</dbReference>
<dbReference type="GO" id="GO:0009097">
    <property type="term" value="P:isoleucine biosynthetic process"/>
    <property type="evidence" value="ECO:0007669"/>
    <property type="project" value="UniProtKB-UniRule"/>
</dbReference>
<dbReference type="GO" id="GO:0009099">
    <property type="term" value="P:L-valine biosynthetic process"/>
    <property type="evidence" value="ECO:0007669"/>
    <property type="project" value="UniProtKB-UniRule"/>
</dbReference>
<dbReference type="FunFam" id="3.50.30.80:FF:000001">
    <property type="entry name" value="Dihydroxy-acid dehydratase"/>
    <property type="match status" value="1"/>
</dbReference>
<dbReference type="Gene3D" id="3.50.30.80">
    <property type="entry name" value="IlvD/EDD C-terminal domain-like"/>
    <property type="match status" value="1"/>
</dbReference>
<dbReference type="HAMAP" id="MF_00012">
    <property type="entry name" value="IlvD"/>
    <property type="match status" value="1"/>
</dbReference>
<dbReference type="InterPro" id="IPR050165">
    <property type="entry name" value="DHAD_IlvD/Edd"/>
</dbReference>
<dbReference type="InterPro" id="IPR042096">
    <property type="entry name" value="Dihydro-acid_dehy_C"/>
</dbReference>
<dbReference type="InterPro" id="IPR004404">
    <property type="entry name" value="DihydroxyA_deHydtase"/>
</dbReference>
<dbReference type="InterPro" id="IPR020558">
    <property type="entry name" value="DiOHA_6PGluconate_deHydtase_CS"/>
</dbReference>
<dbReference type="InterPro" id="IPR056740">
    <property type="entry name" value="ILV_EDD_C"/>
</dbReference>
<dbReference type="InterPro" id="IPR000581">
    <property type="entry name" value="ILV_EDD_N"/>
</dbReference>
<dbReference type="InterPro" id="IPR037237">
    <property type="entry name" value="IlvD/EDD_N"/>
</dbReference>
<dbReference type="NCBIfam" id="TIGR00110">
    <property type="entry name" value="ilvD"/>
    <property type="match status" value="1"/>
</dbReference>
<dbReference type="NCBIfam" id="NF002068">
    <property type="entry name" value="PRK00911.1"/>
    <property type="match status" value="1"/>
</dbReference>
<dbReference type="PANTHER" id="PTHR21000">
    <property type="entry name" value="DIHYDROXY-ACID DEHYDRATASE DAD"/>
    <property type="match status" value="1"/>
</dbReference>
<dbReference type="PANTHER" id="PTHR21000:SF5">
    <property type="entry name" value="DIHYDROXY-ACID DEHYDRATASE, MITOCHONDRIAL"/>
    <property type="match status" value="1"/>
</dbReference>
<dbReference type="Pfam" id="PF24877">
    <property type="entry name" value="ILV_EDD_C"/>
    <property type="match status" value="1"/>
</dbReference>
<dbReference type="Pfam" id="PF00920">
    <property type="entry name" value="ILVD_EDD_N"/>
    <property type="match status" value="1"/>
</dbReference>
<dbReference type="SUPFAM" id="SSF143975">
    <property type="entry name" value="IlvD/EDD N-terminal domain-like"/>
    <property type="match status" value="1"/>
</dbReference>
<dbReference type="SUPFAM" id="SSF52016">
    <property type="entry name" value="LeuD/IlvD-like"/>
    <property type="match status" value="1"/>
</dbReference>
<dbReference type="PROSITE" id="PS00886">
    <property type="entry name" value="ILVD_EDD_1"/>
    <property type="match status" value="1"/>
</dbReference>
<dbReference type="PROSITE" id="PS00887">
    <property type="entry name" value="ILVD_EDD_2"/>
    <property type="match status" value="1"/>
</dbReference>
<reference key="1">
    <citation type="submission" date="2009-01" db="EMBL/GenBank/DDBJ databases">
        <title>Complete sequence of Chloroflexus sp. Y-400-fl.</title>
        <authorList>
            <consortium name="US DOE Joint Genome Institute"/>
            <person name="Lucas S."/>
            <person name="Copeland A."/>
            <person name="Lapidus A."/>
            <person name="Glavina del Rio T."/>
            <person name="Dalin E."/>
            <person name="Tice H."/>
            <person name="Bruce D."/>
            <person name="Goodwin L."/>
            <person name="Pitluck S."/>
            <person name="Sims D."/>
            <person name="Kiss H."/>
            <person name="Brettin T."/>
            <person name="Detter J.C."/>
            <person name="Han C."/>
            <person name="Larimer F."/>
            <person name="Land M."/>
            <person name="Hauser L."/>
            <person name="Kyrpides N."/>
            <person name="Ovchinnikova G."/>
            <person name="Bryant D.A."/>
            <person name="Richardson P."/>
        </authorList>
    </citation>
    <scope>NUCLEOTIDE SEQUENCE [LARGE SCALE GENOMIC DNA]</scope>
    <source>
        <strain>ATCC 29364 / DSM 637 / Y-400-fl</strain>
    </source>
</reference>
<gene>
    <name evidence="1" type="primary">ilvD</name>
    <name type="ordered locus">Chy400_3088</name>
</gene>
<comment type="function">
    <text evidence="1">Functions in the biosynthesis of branched-chain amino acids. Catalyzes the dehydration of (2R,3R)-2,3-dihydroxy-3-methylpentanoate (2,3-dihydroxy-3-methylvalerate) into 2-oxo-3-methylpentanoate (2-oxo-3-methylvalerate) and of (2R)-2,3-dihydroxy-3-methylbutanoate (2,3-dihydroxyisovalerate) into 2-oxo-3-methylbutanoate (2-oxoisovalerate), the penultimate precursor to L-isoleucine and L-valine, respectively.</text>
</comment>
<comment type="catalytic activity">
    <reaction evidence="1">
        <text>(2R)-2,3-dihydroxy-3-methylbutanoate = 3-methyl-2-oxobutanoate + H2O</text>
        <dbReference type="Rhea" id="RHEA:24809"/>
        <dbReference type="ChEBI" id="CHEBI:11851"/>
        <dbReference type="ChEBI" id="CHEBI:15377"/>
        <dbReference type="ChEBI" id="CHEBI:49072"/>
        <dbReference type="EC" id="4.2.1.9"/>
    </reaction>
    <physiologicalReaction direction="left-to-right" evidence="1">
        <dbReference type="Rhea" id="RHEA:24810"/>
    </physiologicalReaction>
</comment>
<comment type="catalytic activity">
    <reaction evidence="1">
        <text>(2R,3R)-2,3-dihydroxy-3-methylpentanoate = (S)-3-methyl-2-oxopentanoate + H2O</text>
        <dbReference type="Rhea" id="RHEA:27694"/>
        <dbReference type="ChEBI" id="CHEBI:15377"/>
        <dbReference type="ChEBI" id="CHEBI:35146"/>
        <dbReference type="ChEBI" id="CHEBI:49258"/>
        <dbReference type="EC" id="4.2.1.9"/>
    </reaction>
    <physiologicalReaction direction="left-to-right" evidence="1">
        <dbReference type="Rhea" id="RHEA:27695"/>
    </physiologicalReaction>
</comment>
<comment type="cofactor">
    <cofactor evidence="1">
        <name>[2Fe-2S] cluster</name>
        <dbReference type="ChEBI" id="CHEBI:190135"/>
    </cofactor>
    <text evidence="1">Binds 1 [2Fe-2S] cluster per subunit. This cluster acts as a Lewis acid cofactor.</text>
</comment>
<comment type="cofactor">
    <cofactor evidence="1">
        <name>Mg(2+)</name>
        <dbReference type="ChEBI" id="CHEBI:18420"/>
    </cofactor>
</comment>
<comment type="pathway">
    <text evidence="1">Amino-acid biosynthesis; L-isoleucine biosynthesis; L-isoleucine from 2-oxobutanoate: step 3/4.</text>
</comment>
<comment type="pathway">
    <text evidence="1">Amino-acid biosynthesis; L-valine biosynthesis; L-valine from pyruvate: step 3/4.</text>
</comment>
<comment type="subunit">
    <text evidence="1">Homodimer.</text>
</comment>
<comment type="similarity">
    <text evidence="1">Belongs to the IlvD/Edd family.</text>
</comment>
<organism>
    <name type="scientific">Chloroflexus aurantiacus (strain ATCC 29364 / DSM 637 / Y-400-fl)</name>
    <dbReference type="NCBI Taxonomy" id="480224"/>
    <lineage>
        <taxon>Bacteria</taxon>
        <taxon>Bacillati</taxon>
        <taxon>Chloroflexota</taxon>
        <taxon>Chloroflexia</taxon>
        <taxon>Chloroflexales</taxon>
        <taxon>Chloroflexineae</taxon>
        <taxon>Chloroflexaceae</taxon>
        <taxon>Chloroflexus</taxon>
    </lineage>
</organism>
<sequence>MSDNRRSRMITEGPQRSPNRAMLRAVGFGDNDFTKPIVGVANGHSTLTPCNAGLGALAARAEEAIRAAGGMPQIFGTITVSDGISMGTEGMKYSLVSREVIADSIETVVNAQRMDGILAVGGCDKNMPGALIAMARLDIPAIFVYGGTIKPGHYKGRDLTIVSAFEAVGEYSAGRIDEHELLEIERHACPGAGSCGGMYTANTMSSAIEALGLSLPGSSTMAAEDEEKALSAARSGEVLVEAIRANRTARQMLTRKSLENAIAVVMALGGSTNAVLHLLAIAHAADVPLTIDDFETIRQRVPVLCDLKPSGRYVATDLHRVGGVPQVMKILLNAGLLHGDCMTITGQTIAETLADVPDEPPANQDVIRPFSQPIYPQGHLAILRGNLAEEGCVAKITGIKQRRITGPARVFDAEEECLEAILSGKIKAGDVVVIRYEGPKGGPGMREMLAPTSAIIGAGLGDSVGLITDGRFSGGTYGLVVGHVAPEAAVGGTIALVEEGDSITIDADARLLQLNVSDEELARRRAAWQPRPPRYTRGVLAKYARLVSSASLGAVTDRFSE</sequence>
<keyword id="KW-0001">2Fe-2S</keyword>
<keyword id="KW-0028">Amino-acid biosynthesis</keyword>
<keyword id="KW-0100">Branched-chain amino acid biosynthesis</keyword>
<keyword id="KW-0408">Iron</keyword>
<keyword id="KW-0411">Iron-sulfur</keyword>
<keyword id="KW-0456">Lyase</keyword>
<keyword id="KW-0460">Magnesium</keyword>
<keyword id="KW-0479">Metal-binding</keyword>